<comment type="function">
    <text evidence="1">Located at the top of the head of the 30S subunit, it contacts several helices of the 16S rRNA. In the 70S ribosome it contacts the 23S rRNA (bridge B1a) and protein L5 of the 50S subunit (bridge B1b), connecting the 2 subunits; these bridges are implicated in subunit movement.</text>
</comment>
<comment type="subunit">
    <text evidence="1">Part of the 30S ribosomal subunit. Forms a loose heterodimer with protein S19. Forms two bridges to the 50S subunit in the 70S ribosome.</text>
</comment>
<comment type="similarity">
    <text evidence="1">Belongs to the universal ribosomal protein uS13 family.</text>
</comment>
<name>RS13_METKA</name>
<dbReference type="EMBL" id="AE009439">
    <property type="protein sequence ID" value="AAM02684.1"/>
    <property type="molecule type" value="Genomic_DNA"/>
</dbReference>
<dbReference type="RefSeq" id="WP_011019839.1">
    <property type="nucleotide sequence ID" value="NC_003551.1"/>
</dbReference>
<dbReference type="SMR" id="Q8TVC1"/>
<dbReference type="FunCoup" id="Q8TVC1">
    <property type="interactions" value="175"/>
</dbReference>
<dbReference type="STRING" id="190192.MK1471"/>
<dbReference type="PaxDb" id="190192-MK1471"/>
<dbReference type="EnsemblBacteria" id="AAM02684">
    <property type="protein sequence ID" value="AAM02684"/>
    <property type="gene ID" value="MK1471"/>
</dbReference>
<dbReference type="GeneID" id="1478066"/>
<dbReference type="KEGG" id="mka:MK1471"/>
<dbReference type="PATRIC" id="fig|190192.8.peg.1627"/>
<dbReference type="HOGENOM" id="CLU_103849_0_0_2"/>
<dbReference type="InParanoid" id="Q8TVC1"/>
<dbReference type="OrthoDB" id="372127at2157"/>
<dbReference type="Proteomes" id="UP000001826">
    <property type="component" value="Chromosome"/>
</dbReference>
<dbReference type="GO" id="GO:0005829">
    <property type="term" value="C:cytosol"/>
    <property type="evidence" value="ECO:0007669"/>
    <property type="project" value="TreeGrafter"/>
</dbReference>
<dbReference type="GO" id="GO:0015935">
    <property type="term" value="C:small ribosomal subunit"/>
    <property type="evidence" value="ECO:0007669"/>
    <property type="project" value="TreeGrafter"/>
</dbReference>
<dbReference type="GO" id="GO:0019843">
    <property type="term" value="F:rRNA binding"/>
    <property type="evidence" value="ECO:0007669"/>
    <property type="project" value="UniProtKB-UniRule"/>
</dbReference>
<dbReference type="GO" id="GO:0003735">
    <property type="term" value="F:structural constituent of ribosome"/>
    <property type="evidence" value="ECO:0007669"/>
    <property type="project" value="InterPro"/>
</dbReference>
<dbReference type="GO" id="GO:0006412">
    <property type="term" value="P:translation"/>
    <property type="evidence" value="ECO:0007669"/>
    <property type="project" value="UniProtKB-UniRule"/>
</dbReference>
<dbReference type="FunFam" id="1.10.8.50:FF:000001">
    <property type="entry name" value="30S ribosomal protein S13"/>
    <property type="match status" value="1"/>
</dbReference>
<dbReference type="FunFam" id="4.10.910.10:FF:000002">
    <property type="entry name" value="40S ribosomal protein S18"/>
    <property type="match status" value="1"/>
</dbReference>
<dbReference type="Gene3D" id="1.10.8.50">
    <property type="match status" value="1"/>
</dbReference>
<dbReference type="Gene3D" id="4.10.910.10">
    <property type="entry name" value="30s ribosomal protein s13, domain 2"/>
    <property type="match status" value="1"/>
</dbReference>
<dbReference type="HAMAP" id="MF_01315">
    <property type="entry name" value="Ribosomal_uS13"/>
    <property type="match status" value="1"/>
</dbReference>
<dbReference type="InterPro" id="IPR027437">
    <property type="entry name" value="Rbsml_uS13_C"/>
</dbReference>
<dbReference type="InterPro" id="IPR001892">
    <property type="entry name" value="Ribosomal_uS13"/>
</dbReference>
<dbReference type="InterPro" id="IPR010979">
    <property type="entry name" value="Ribosomal_uS13-like_H2TH"/>
</dbReference>
<dbReference type="InterPro" id="IPR019977">
    <property type="entry name" value="Ribosomal_uS13_archaeal"/>
</dbReference>
<dbReference type="InterPro" id="IPR018269">
    <property type="entry name" value="Ribosomal_uS13_CS"/>
</dbReference>
<dbReference type="NCBIfam" id="NF003140">
    <property type="entry name" value="PRK04053.1"/>
    <property type="match status" value="1"/>
</dbReference>
<dbReference type="NCBIfam" id="TIGR03629">
    <property type="entry name" value="uS13_arch"/>
    <property type="match status" value="1"/>
</dbReference>
<dbReference type="PANTHER" id="PTHR10871">
    <property type="entry name" value="30S RIBOSOMAL PROTEIN S13/40S RIBOSOMAL PROTEIN S18"/>
    <property type="match status" value="1"/>
</dbReference>
<dbReference type="PANTHER" id="PTHR10871:SF3">
    <property type="entry name" value="SMALL RIBOSOMAL SUBUNIT PROTEIN US13"/>
    <property type="match status" value="1"/>
</dbReference>
<dbReference type="Pfam" id="PF00416">
    <property type="entry name" value="Ribosomal_S13"/>
    <property type="match status" value="1"/>
</dbReference>
<dbReference type="PIRSF" id="PIRSF002134">
    <property type="entry name" value="Ribosomal_S13"/>
    <property type="match status" value="1"/>
</dbReference>
<dbReference type="SUPFAM" id="SSF46946">
    <property type="entry name" value="S13-like H2TH domain"/>
    <property type="match status" value="1"/>
</dbReference>
<dbReference type="PROSITE" id="PS00646">
    <property type="entry name" value="RIBOSOMAL_S13_1"/>
    <property type="match status" value="1"/>
</dbReference>
<dbReference type="PROSITE" id="PS50159">
    <property type="entry name" value="RIBOSOMAL_S13_2"/>
    <property type="match status" value="1"/>
</dbReference>
<proteinExistence type="inferred from homology"/>
<organism>
    <name type="scientific">Methanopyrus kandleri (strain AV19 / DSM 6324 / JCM 9639 / NBRC 100938)</name>
    <dbReference type="NCBI Taxonomy" id="190192"/>
    <lineage>
        <taxon>Archaea</taxon>
        <taxon>Methanobacteriati</taxon>
        <taxon>Methanobacteriota</taxon>
        <taxon>Methanomada group</taxon>
        <taxon>Methanopyri</taxon>
        <taxon>Methanopyrales</taxon>
        <taxon>Methanopyraceae</taxon>
        <taxon>Methanopyrus</taxon>
    </lineage>
</organism>
<reference key="1">
    <citation type="journal article" date="2002" name="Proc. Natl. Acad. Sci. U.S.A.">
        <title>The complete genome of hyperthermophile Methanopyrus kandleri AV19 and monophyly of archaeal methanogens.</title>
        <authorList>
            <person name="Slesarev A.I."/>
            <person name="Mezhevaya K.V."/>
            <person name="Makarova K.S."/>
            <person name="Polushin N.N."/>
            <person name="Shcherbinina O.V."/>
            <person name="Shakhova V.V."/>
            <person name="Belova G.I."/>
            <person name="Aravind L."/>
            <person name="Natale D.A."/>
            <person name="Rogozin I.B."/>
            <person name="Tatusov R.L."/>
            <person name="Wolf Y.I."/>
            <person name="Stetter K.O."/>
            <person name="Malykh A.G."/>
            <person name="Koonin E.V."/>
            <person name="Kozyavkin S.A."/>
        </authorList>
    </citation>
    <scope>NUCLEOTIDE SEQUENCE [LARGE SCALE GENOMIC DNA]</scope>
    <source>
        <strain>AV19 / DSM 6324 / JCM 9639 / NBRC 100938</strain>
    </source>
</reference>
<accession>Q8TVC1</accession>
<protein>
    <recommendedName>
        <fullName evidence="1">Small ribosomal subunit protein uS13</fullName>
    </recommendedName>
    <alternativeName>
        <fullName evidence="3">30S ribosomal protein S13</fullName>
    </alternativeName>
</protein>
<sequence>MADDEVKPIVRIADVDLDGHKKVPYALTGIKGIGIRMAYAICRELGLDEEKKLGELSDEEIERIEEEIKKLSEGESNIPSWMYNRQKDYETGEDMHLVGAELEMTVKQDIDRLKKIRAYRGIRHELGLPVRGQRTKSSFRRGRTVGVKKKQ</sequence>
<evidence type="ECO:0000255" key="1">
    <source>
        <dbReference type="HAMAP-Rule" id="MF_01315"/>
    </source>
</evidence>
<evidence type="ECO:0000256" key="2">
    <source>
        <dbReference type="SAM" id="MobiDB-lite"/>
    </source>
</evidence>
<evidence type="ECO:0000305" key="3"/>
<keyword id="KW-1185">Reference proteome</keyword>
<keyword id="KW-0687">Ribonucleoprotein</keyword>
<keyword id="KW-0689">Ribosomal protein</keyword>
<keyword id="KW-0694">RNA-binding</keyword>
<keyword id="KW-0699">rRNA-binding</keyword>
<gene>
    <name evidence="1" type="primary">rps13</name>
    <name type="synonym">rpsM</name>
    <name type="ordered locus">MK1471</name>
</gene>
<feature type="chain" id="PRO_0000132182" description="Small ribosomal subunit protein uS13">
    <location>
        <begin position="1"/>
        <end position="151"/>
    </location>
</feature>
<feature type="region of interest" description="Disordered" evidence="2">
    <location>
        <begin position="131"/>
        <end position="151"/>
    </location>
</feature>
<feature type="compositionally biased region" description="Basic residues" evidence="2">
    <location>
        <begin position="133"/>
        <end position="151"/>
    </location>
</feature>